<feature type="chain" id="PRO_0000383879" description="Hydroxyethylthiazole kinase">
    <location>
        <begin position="1"/>
        <end position="278"/>
    </location>
</feature>
<feature type="binding site" evidence="1">
    <location>
        <position position="51"/>
    </location>
    <ligand>
        <name>substrate</name>
    </ligand>
</feature>
<feature type="binding site" evidence="1">
    <location>
        <position position="127"/>
    </location>
    <ligand>
        <name>ATP</name>
        <dbReference type="ChEBI" id="CHEBI:30616"/>
    </ligand>
</feature>
<feature type="binding site" evidence="1">
    <location>
        <position position="173"/>
    </location>
    <ligand>
        <name>ATP</name>
        <dbReference type="ChEBI" id="CHEBI:30616"/>
    </ligand>
</feature>
<feature type="binding site" evidence="1">
    <location>
        <position position="201"/>
    </location>
    <ligand>
        <name>substrate</name>
    </ligand>
</feature>
<comment type="function">
    <text evidence="1">Catalyzes the phosphorylation of the hydroxyl group of 4-methyl-5-beta-hydroxyethylthiazole (THZ).</text>
</comment>
<comment type="catalytic activity">
    <reaction evidence="1">
        <text>5-(2-hydroxyethyl)-4-methylthiazole + ATP = 4-methyl-5-(2-phosphooxyethyl)-thiazole + ADP + H(+)</text>
        <dbReference type="Rhea" id="RHEA:24212"/>
        <dbReference type="ChEBI" id="CHEBI:15378"/>
        <dbReference type="ChEBI" id="CHEBI:17957"/>
        <dbReference type="ChEBI" id="CHEBI:30616"/>
        <dbReference type="ChEBI" id="CHEBI:58296"/>
        <dbReference type="ChEBI" id="CHEBI:456216"/>
        <dbReference type="EC" id="2.7.1.50"/>
    </reaction>
</comment>
<comment type="cofactor">
    <cofactor evidence="1">
        <name>Mg(2+)</name>
        <dbReference type="ChEBI" id="CHEBI:18420"/>
    </cofactor>
</comment>
<comment type="pathway">
    <text evidence="1">Cofactor biosynthesis; thiamine diphosphate biosynthesis; 4-methyl-5-(2-phosphoethyl)-thiazole from 5-(2-hydroxyethyl)-4-methylthiazole: step 1/1.</text>
</comment>
<comment type="similarity">
    <text evidence="1">Belongs to the Thz kinase family.</text>
</comment>
<comment type="sequence caution" evidence="2">
    <conflict type="erroneous initiation">
        <sequence resource="EMBL-CDS" id="ACB34472"/>
    </conflict>
</comment>
<accession>B1Y3E4</accession>
<gene>
    <name evidence="1" type="primary">thiM</name>
    <name type="ordered locus">Lcho_2206</name>
</gene>
<name>THIM_LEPCP</name>
<proteinExistence type="inferred from homology"/>
<sequence>MSLAAPLTAADLWADVLAVRAQSPLVHSITNFVVMNFNANVLLALGAAPVMAHAHDEVADMAGIAQALVLNIGTLEPAWVESMHKARRAARARGIPVVLDPVGAGATAYRNRALSGLLAAGAPTVIRGNGSEVLSVAGLGAPTRGVDSTLSSNDAVAAAQTLSRRIGSVVCVSGADDHVVDALGRWATLSNGHPWMTRITGVGCSATAMIGAFAAVQPDAWRATTAAMAYLGVVGEWAAEQVIAAGNGVGSLQVKLLDGLQLLDDATFRARLKMTVHG</sequence>
<dbReference type="EC" id="2.7.1.50" evidence="1"/>
<dbReference type="EMBL" id="CP001013">
    <property type="protein sequence ID" value="ACB34472.1"/>
    <property type="status" value="ALT_INIT"/>
    <property type="molecule type" value="Genomic_DNA"/>
</dbReference>
<dbReference type="RefSeq" id="WP_043704194.1">
    <property type="nucleotide sequence ID" value="NC_010524.1"/>
</dbReference>
<dbReference type="SMR" id="B1Y3E4"/>
<dbReference type="STRING" id="395495.Lcho_2206"/>
<dbReference type="KEGG" id="lch:Lcho_2206"/>
<dbReference type="eggNOG" id="COG2145">
    <property type="taxonomic scope" value="Bacteria"/>
</dbReference>
<dbReference type="HOGENOM" id="CLU_019943_0_1_4"/>
<dbReference type="OrthoDB" id="8909021at2"/>
<dbReference type="UniPathway" id="UPA00060">
    <property type="reaction ID" value="UER00139"/>
</dbReference>
<dbReference type="Proteomes" id="UP000001693">
    <property type="component" value="Chromosome"/>
</dbReference>
<dbReference type="GO" id="GO:0005524">
    <property type="term" value="F:ATP binding"/>
    <property type="evidence" value="ECO:0007669"/>
    <property type="project" value="UniProtKB-UniRule"/>
</dbReference>
<dbReference type="GO" id="GO:0004417">
    <property type="term" value="F:hydroxyethylthiazole kinase activity"/>
    <property type="evidence" value="ECO:0007669"/>
    <property type="project" value="UniProtKB-UniRule"/>
</dbReference>
<dbReference type="GO" id="GO:0000287">
    <property type="term" value="F:magnesium ion binding"/>
    <property type="evidence" value="ECO:0007669"/>
    <property type="project" value="UniProtKB-UniRule"/>
</dbReference>
<dbReference type="GO" id="GO:0009228">
    <property type="term" value="P:thiamine biosynthetic process"/>
    <property type="evidence" value="ECO:0007669"/>
    <property type="project" value="UniProtKB-KW"/>
</dbReference>
<dbReference type="GO" id="GO:0009229">
    <property type="term" value="P:thiamine diphosphate biosynthetic process"/>
    <property type="evidence" value="ECO:0007669"/>
    <property type="project" value="UniProtKB-UniRule"/>
</dbReference>
<dbReference type="CDD" id="cd01170">
    <property type="entry name" value="THZ_kinase"/>
    <property type="match status" value="1"/>
</dbReference>
<dbReference type="Gene3D" id="3.40.1190.20">
    <property type="match status" value="1"/>
</dbReference>
<dbReference type="HAMAP" id="MF_00228">
    <property type="entry name" value="Thz_kinase"/>
    <property type="match status" value="1"/>
</dbReference>
<dbReference type="InterPro" id="IPR000417">
    <property type="entry name" value="Hyethyz_kinase"/>
</dbReference>
<dbReference type="InterPro" id="IPR029056">
    <property type="entry name" value="Ribokinase-like"/>
</dbReference>
<dbReference type="NCBIfam" id="NF006830">
    <property type="entry name" value="PRK09355.1"/>
    <property type="match status" value="1"/>
</dbReference>
<dbReference type="NCBIfam" id="TIGR00694">
    <property type="entry name" value="thiM"/>
    <property type="match status" value="1"/>
</dbReference>
<dbReference type="Pfam" id="PF02110">
    <property type="entry name" value="HK"/>
    <property type="match status" value="1"/>
</dbReference>
<dbReference type="PIRSF" id="PIRSF000513">
    <property type="entry name" value="Thz_kinase"/>
    <property type="match status" value="1"/>
</dbReference>
<dbReference type="PRINTS" id="PR01099">
    <property type="entry name" value="HYETHTZKNASE"/>
</dbReference>
<dbReference type="SUPFAM" id="SSF53613">
    <property type="entry name" value="Ribokinase-like"/>
    <property type="match status" value="1"/>
</dbReference>
<organism>
    <name type="scientific">Leptothrix cholodnii (strain ATCC 51168 / LMG 8142 / SP-6)</name>
    <name type="common">Leptothrix discophora (strain SP-6)</name>
    <dbReference type="NCBI Taxonomy" id="395495"/>
    <lineage>
        <taxon>Bacteria</taxon>
        <taxon>Pseudomonadati</taxon>
        <taxon>Pseudomonadota</taxon>
        <taxon>Betaproteobacteria</taxon>
        <taxon>Burkholderiales</taxon>
        <taxon>Sphaerotilaceae</taxon>
        <taxon>Leptothrix</taxon>
    </lineage>
</organism>
<reference key="1">
    <citation type="submission" date="2008-03" db="EMBL/GenBank/DDBJ databases">
        <title>Complete sequence of Leptothrix cholodnii SP-6.</title>
        <authorList>
            <consortium name="US DOE Joint Genome Institute"/>
            <person name="Copeland A."/>
            <person name="Lucas S."/>
            <person name="Lapidus A."/>
            <person name="Glavina del Rio T."/>
            <person name="Dalin E."/>
            <person name="Tice H."/>
            <person name="Bruce D."/>
            <person name="Goodwin L."/>
            <person name="Pitluck S."/>
            <person name="Chertkov O."/>
            <person name="Brettin T."/>
            <person name="Detter J.C."/>
            <person name="Han C."/>
            <person name="Kuske C.R."/>
            <person name="Schmutz J."/>
            <person name="Larimer F."/>
            <person name="Land M."/>
            <person name="Hauser L."/>
            <person name="Kyrpides N."/>
            <person name="Lykidis A."/>
            <person name="Emerson D."/>
            <person name="Richardson P."/>
        </authorList>
    </citation>
    <scope>NUCLEOTIDE SEQUENCE [LARGE SCALE GENOMIC DNA]</scope>
    <source>
        <strain>ATCC 51168 / LMG 8142 / SP-6</strain>
    </source>
</reference>
<protein>
    <recommendedName>
        <fullName evidence="1">Hydroxyethylthiazole kinase</fullName>
        <ecNumber evidence="1">2.7.1.50</ecNumber>
    </recommendedName>
    <alternativeName>
        <fullName evidence="1">4-methyl-5-beta-hydroxyethylthiazole kinase</fullName>
        <shortName evidence="1">TH kinase</shortName>
        <shortName evidence="1">Thz kinase</shortName>
    </alternativeName>
</protein>
<keyword id="KW-0067">ATP-binding</keyword>
<keyword id="KW-0418">Kinase</keyword>
<keyword id="KW-0460">Magnesium</keyword>
<keyword id="KW-0479">Metal-binding</keyword>
<keyword id="KW-0547">Nucleotide-binding</keyword>
<keyword id="KW-1185">Reference proteome</keyword>
<keyword id="KW-0784">Thiamine biosynthesis</keyword>
<keyword id="KW-0808">Transferase</keyword>
<evidence type="ECO:0000255" key="1">
    <source>
        <dbReference type="HAMAP-Rule" id="MF_00228"/>
    </source>
</evidence>
<evidence type="ECO:0000305" key="2"/>